<gene>
    <name type="ordered locus">KPK_0772</name>
</gene>
<accession>B5XUE6</accession>
<evidence type="ECO:0000255" key="1">
    <source>
        <dbReference type="HAMAP-Rule" id="MF_01175"/>
    </source>
</evidence>
<feature type="chain" id="PRO_1000138078" description="tRNA-modifying protein YgfZ">
    <location>
        <begin position="1"/>
        <end position="327"/>
    </location>
</feature>
<feature type="binding site" evidence="1">
    <location>
        <position position="27"/>
    </location>
    <ligand>
        <name>folate</name>
        <dbReference type="ChEBI" id="CHEBI:62501"/>
    </ligand>
</feature>
<feature type="binding site" evidence="1">
    <location>
        <position position="189"/>
    </location>
    <ligand>
        <name>folate</name>
        <dbReference type="ChEBI" id="CHEBI:62501"/>
    </ligand>
</feature>
<name>YGFZ_KLEP3</name>
<comment type="function">
    <text evidence="1">Folate-binding protein involved in regulating the level of ATP-DnaA and in the modification of some tRNAs. It is probably a key factor in regulatory networks that act via tRNA modification, such as initiation of chromosomal replication.</text>
</comment>
<comment type="subcellular location">
    <subcellularLocation>
        <location evidence="1">Cytoplasm</location>
    </subcellularLocation>
</comment>
<comment type="similarity">
    <text evidence="1">Belongs to the tRNA-modifying YgfZ family.</text>
</comment>
<reference key="1">
    <citation type="journal article" date="2008" name="PLoS Genet.">
        <title>Complete genome sequence of the N2-fixing broad host range endophyte Klebsiella pneumoniae 342 and virulence predictions verified in mice.</title>
        <authorList>
            <person name="Fouts D.E."/>
            <person name="Tyler H.L."/>
            <person name="DeBoy R.T."/>
            <person name="Daugherty S."/>
            <person name="Ren Q."/>
            <person name="Badger J.H."/>
            <person name="Durkin A.S."/>
            <person name="Huot H."/>
            <person name="Shrivastava S."/>
            <person name="Kothari S."/>
            <person name="Dodson R.J."/>
            <person name="Mohamoud Y."/>
            <person name="Khouri H."/>
            <person name="Roesch L.F.W."/>
            <person name="Krogfelt K.A."/>
            <person name="Struve C."/>
            <person name="Triplett E.W."/>
            <person name="Methe B.A."/>
        </authorList>
    </citation>
    <scope>NUCLEOTIDE SEQUENCE [LARGE SCALE GENOMIC DNA]</scope>
    <source>
        <strain>342</strain>
    </source>
</reference>
<organism>
    <name type="scientific">Klebsiella pneumoniae (strain 342)</name>
    <dbReference type="NCBI Taxonomy" id="507522"/>
    <lineage>
        <taxon>Bacteria</taxon>
        <taxon>Pseudomonadati</taxon>
        <taxon>Pseudomonadota</taxon>
        <taxon>Gammaproteobacteria</taxon>
        <taxon>Enterobacterales</taxon>
        <taxon>Enterobacteriaceae</taxon>
        <taxon>Klebsiella/Raoultella group</taxon>
        <taxon>Klebsiella</taxon>
        <taxon>Klebsiella pneumoniae complex</taxon>
    </lineage>
</organism>
<dbReference type="EMBL" id="CP000964">
    <property type="protein sequence ID" value="ACI06714.1"/>
    <property type="molecule type" value="Genomic_DNA"/>
</dbReference>
<dbReference type="SMR" id="B5XUE6"/>
<dbReference type="KEGG" id="kpe:KPK_0772"/>
<dbReference type="HOGENOM" id="CLU_007884_6_1_6"/>
<dbReference type="BioCyc" id="KPNE507522:GI0B-772-MONOMER"/>
<dbReference type="Proteomes" id="UP000001734">
    <property type="component" value="Chromosome"/>
</dbReference>
<dbReference type="GO" id="GO:0005737">
    <property type="term" value="C:cytoplasm"/>
    <property type="evidence" value="ECO:0007669"/>
    <property type="project" value="UniProtKB-SubCell"/>
</dbReference>
<dbReference type="GO" id="GO:0005542">
    <property type="term" value="F:folic acid binding"/>
    <property type="evidence" value="ECO:0007669"/>
    <property type="project" value="UniProtKB-UniRule"/>
</dbReference>
<dbReference type="GO" id="GO:0016226">
    <property type="term" value="P:iron-sulfur cluster assembly"/>
    <property type="evidence" value="ECO:0007669"/>
    <property type="project" value="TreeGrafter"/>
</dbReference>
<dbReference type="GO" id="GO:0009451">
    <property type="term" value="P:RNA modification"/>
    <property type="evidence" value="ECO:0007669"/>
    <property type="project" value="InterPro"/>
</dbReference>
<dbReference type="GO" id="GO:0008033">
    <property type="term" value="P:tRNA processing"/>
    <property type="evidence" value="ECO:0007669"/>
    <property type="project" value="UniProtKB-UniRule"/>
</dbReference>
<dbReference type="FunFam" id="2.40.30.160:FF:000001">
    <property type="entry name" value="tRNA-modifying protein YgfZ"/>
    <property type="match status" value="1"/>
</dbReference>
<dbReference type="FunFam" id="3.30.70.1400:FF:000002">
    <property type="entry name" value="tRNA-modifying protein YgfZ"/>
    <property type="match status" value="1"/>
</dbReference>
<dbReference type="FunFam" id="3.30.70.1630:FF:000001">
    <property type="entry name" value="tRNA-modifying protein YgfZ"/>
    <property type="match status" value="1"/>
</dbReference>
<dbReference type="Gene3D" id="2.40.30.160">
    <property type="match status" value="1"/>
</dbReference>
<dbReference type="Gene3D" id="3.30.70.1630">
    <property type="match status" value="1"/>
</dbReference>
<dbReference type="Gene3D" id="3.30.70.1400">
    <property type="entry name" value="Aminomethyltransferase beta-barrel domains"/>
    <property type="match status" value="1"/>
</dbReference>
<dbReference type="HAMAP" id="MF_01175">
    <property type="entry name" value="tRNA_modifying_YgfZ"/>
    <property type="match status" value="1"/>
</dbReference>
<dbReference type="InterPro" id="IPR006222">
    <property type="entry name" value="GCV_T_N"/>
</dbReference>
<dbReference type="InterPro" id="IPR029043">
    <property type="entry name" value="GcvT/YgfZ_C"/>
</dbReference>
<dbReference type="InterPro" id="IPR023758">
    <property type="entry name" value="tRNA-modifying_YgfZ"/>
</dbReference>
<dbReference type="InterPro" id="IPR045179">
    <property type="entry name" value="YgfZ/GcvT"/>
</dbReference>
<dbReference type="InterPro" id="IPR017703">
    <property type="entry name" value="YgfZ/GcvT_CS"/>
</dbReference>
<dbReference type="InterPro" id="IPR048451">
    <property type="entry name" value="YgfZ_barrel"/>
</dbReference>
<dbReference type="NCBIfam" id="NF007110">
    <property type="entry name" value="PRK09559.1"/>
    <property type="match status" value="1"/>
</dbReference>
<dbReference type="NCBIfam" id="TIGR03317">
    <property type="entry name" value="ygfZ_signature"/>
    <property type="match status" value="1"/>
</dbReference>
<dbReference type="PANTHER" id="PTHR22602">
    <property type="entry name" value="TRANSFERASE CAF17, MITOCHONDRIAL-RELATED"/>
    <property type="match status" value="1"/>
</dbReference>
<dbReference type="PANTHER" id="PTHR22602:SF0">
    <property type="entry name" value="TRANSFERASE CAF17, MITOCHONDRIAL-RELATED"/>
    <property type="match status" value="1"/>
</dbReference>
<dbReference type="Pfam" id="PF01571">
    <property type="entry name" value="GCV_T"/>
    <property type="match status" value="1"/>
</dbReference>
<dbReference type="Pfam" id="PF21130">
    <property type="entry name" value="YgfZ_barrel"/>
    <property type="match status" value="1"/>
</dbReference>
<dbReference type="SUPFAM" id="SSF101790">
    <property type="entry name" value="Aminomethyltransferase beta-barrel domain"/>
    <property type="match status" value="1"/>
</dbReference>
<dbReference type="SUPFAM" id="SSF103025">
    <property type="entry name" value="Folate-binding domain"/>
    <property type="match status" value="1"/>
</dbReference>
<protein>
    <recommendedName>
        <fullName evidence="1">tRNA-modifying protein YgfZ</fullName>
    </recommendedName>
</protein>
<sequence length="327" mass="35728">MAFTPFPPRQPSSSARLPLTLMTLDDWALATISGPDSEKYLQGQITADVSNLTDAQHLLAAHCDAKGKMWSNLRVFRRDGGFAWIERRSLRDVQLTELKKYAVFSKVTIAANDDLVLLGVAGFQARAALAPLFAALPDAATPVVSEDATSLLWFEHPGERFLLVTDVDTANRVTDALRGEAQLNNSQQWLALNIEAGLPVIDSANSGQFIPQATNLQALGGISFRKGCYTGQEMVARAKFRGANKRALWTLSGTASRVPEAGEDLELKMGDNWRRTGTVLAAVQLDDGQLLVQVVMNNDMEPDSIFRVRDDAGSLRIEPLPYSLEDA</sequence>
<proteinExistence type="inferred from homology"/>
<keyword id="KW-0963">Cytoplasm</keyword>
<keyword id="KW-0290">Folate-binding</keyword>
<keyword id="KW-0819">tRNA processing</keyword>